<protein>
    <recommendedName>
        <fullName evidence="1">Methionine import ATP-binding protein MetN 1</fullName>
        <ecNumber evidence="1">7.4.2.11</ecNumber>
    </recommendedName>
</protein>
<proteinExistence type="inferred from homology"/>
<organism>
    <name type="scientific">Staphylococcus aureus (strain bovine RF122 / ET3-1)</name>
    <dbReference type="NCBI Taxonomy" id="273036"/>
    <lineage>
        <taxon>Bacteria</taxon>
        <taxon>Bacillati</taxon>
        <taxon>Bacillota</taxon>
        <taxon>Bacilli</taxon>
        <taxon>Bacillales</taxon>
        <taxon>Staphylococcaceae</taxon>
        <taxon>Staphylococcus</taxon>
    </lineage>
</organism>
<sequence>MIEFRQVSKSFHKKKQTIDALKDVSFTVNRNDIFGVIGYSGAGKSTLVRLVNHLEAASNGQVIVDAHDITNYSDKMMRDIKKDIGMIFQHFNLLNSATVFKNVAMPLILSKKSKTEIKQRVTEMLEFVGLSDKKDQFPDELSGGQKQRVAIARALVTNPKILLCDEATSALDPSTTASILTLLKNVNQTFGITIMMITHEMRVIKDICNRVAVMEKGQVVETGTVKEVFSHPKTTIAQNFVSTVIQTEPSTSLIRRLNDEQVGDFKDYKIFVEETQVTQPIINDLIQICGREVKILFSSMSEIQGNTVCYMWLRFNMDQQFDDTAINQYFKEKNIQFEEVH</sequence>
<reference key="1">
    <citation type="journal article" date="2007" name="PLoS ONE">
        <title>Molecular correlates of host specialization in Staphylococcus aureus.</title>
        <authorList>
            <person name="Herron-Olson L."/>
            <person name="Fitzgerald J.R."/>
            <person name="Musser J.M."/>
            <person name="Kapur V."/>
        </authorList>
    </citation>
    <scope>NUCLEOTIDE SEQUENCE [LARGE SCALE GENOMIC DNA]</scope>
    <source>
        <strain>bovine RF122 / ET3-1</strain>
    </source>
</reference>
<gene>
    <name evidence="1" type="primary">metN1</name>
    <name type="ordered locus">SAB0411</name>
</gene>
<name>METN1_STAAB</name>
<dbReference type="EC" id="7.4.2.11" evidence="1"/>
<dbReference type="EMBL" id="AJ938182">
    <property type="protein sequence ID" value="CAI80099.1"/>
    <property type="molecule type" value="Genomic_DNA"/>
</dbReference>
<dbReference type="RefSeq" id="WP_000569264.1">
    <property type="nucleotide sequence ID" value="NC_007622.1"/>
</dbReference>
<dbReference type="SMR" id="Q2YVT7"/>
<dbReference type="KEGG" id="sab:SAB0411"/>
<dbReference type="HOGENOM" id="CLU_000604_1_3_9"/>
<dbReference type="GO" id="GO:0005886">
    <property type="term" value="C:plasma membrane"/>
    <property type="evidence" value="ECO:0007669"/>
    <property type="project" value="UniProtKB-SubCell"/>
</dbReference>
<dbReference type="GO" id="GO:0033232">
    <property type="term" value="F:ABC-type D-methionine transporter activity"/>
    <property type="evidence" value="ECO:0007669"/>
    <property type="project" value="UniProtKB-EC"/>
</dbReference>
<dbReference type="GO" id="GO:0005524">
    <property type="term" value="F:ATP binding"/>
    <property type="evidence" value="ECO:0007669"/>
    <property type="project" value="UniProtKB-KW"/>
</dbReference>
<dbReference type="GO" id="GO:0016887">
    <property type="term" value="F:ATP hydrolysis activity"/>
    <property type="evidence" value="ECO:0007669"/>
    <property type="project" value="InterPro"/>
</dbReference>
<dbReference type="CDD" id="cd03258">
    <property type="entry name" value="ABC_MetN_methionine_transporter"/>
    <property type="match status" value="1"/>
</dbReference>
<dbReference type="FunFam" id="3.40.50.300:FF:000056">
    <property type="entry name" value="Cell division ATP-binding protein FtsE"/>
    <property type="match status" value="1"/>
</dbReference>
<dbReference type="Gene3D" id="3.30.70.260">
    <property type="match status" value="1"/>
</dbReference>
<dbReference type="Gene3D" id="3.40.50.300">
    <property type="entry name" value="P-loop containing nucleotide triphosphate hydrolases"/>
    <property type="match status" value="1"/>
</dbReference>
<dbReference type="InterPro" id="IPR003593">
    <property type="entry name" value="AAA+_ATPase"/>
</dbReference>
<dbReference type="InterPro" id="IPR003439">
    <property type="entry name" value="ABC_transporter-like_ATP-bd"/>
</dbReference>
<dbReference type="InterPro" id="IPR017871">
    <property type="entry name" value="ABC_transporter-like_CS"/>
</dbReference>
<dbReference type="InterPro" id="IPR045865">
    <property type="entry name" value="ACT-like_dom_sf"/>
</dbReference>
<dbReference type="InterPro" id="IPR041701">
    <property type="entry name" value="MetN_ABC"/>
</dbReference>
<dbReference type="InterPro" id="IPR050086">
    <property type="entry name" value="MetN_ABC_transporter-like"/>
</dbReference>
<dbReference type="InterPro" id="IPR018449">
    <property type="entry name" value="NIL_domain"/>
</dbReference>
<dbReference type="InterPro" id="IPR027417">
    <property type="entry name" value="P-loop_NTPase"/>
</dbReference>
<dbReference type="PANTHER" id="PTHR43166">
    <property type="entry name" value="AMINO ACID IMPORT ATP-BINDING PROTEIN"/>
    <property type="match status" value="1"/>
</dbReference>
<dbReference type="PANTHER" id="PTHR43166:SF30">
    <property type="entry name" value="METHIONINE IMPORT ATP-BINDING PROTEIN METN"/>
    <property type="match status" value="1"/>
</dbReference>
<dbReference type="Pfam" id="PF00005">
    <property type="entry name" value="ABC_tran"/>
    <property type="match status" value="1"/>
</dbReference>
<dbReference type="Pfam" id="PF09383">
    <property type="entry name" value="NIL"/>
    <property type="match status" value="1"/>
</dbReference>
<dbReference type="SMART" id="SM00382">
    <property type="entry name" value="AAA"/>
    <property type="match status" value="1"/>
</dbReference>
<dbReference type="SMART" id="SM00930">
    <property type="entry name" value="NIL"/>
    <property type="match status" value="1"/>
</dbReference>
<dbReference type="SUPFAM" id="SSF55021">
    <property type="entry name" value="ACT-like"/>
    <property type="match status" value="1"/>
</dbReference>
<dbReference type="SUPFAM" id="SSF52540">
    <property type="entry name" value="P-loop containing nucleoside triphosphate hydrolases"/>
    <property type="match status" value="1"/>
</dbReference>
<dbReference type="PROSITE" id="PS00211">
    <property type="entry name" value="ABC_TRANSPORTER_1"/>
    <property type="match status" value="1"/>
</dbReference>
<dbReference type="PROSITE" id="PS50893">
    <property type="entry name" value="ABC_TRANSPORTER_2"/>
    <property type="match status" value="1"/>
</dbReference>
<dbReference type="PROSITE" id="PS51264">
    <property type="entry name" value="METN"/>
    <property type="match status" value="1"/>
</dbReference>
<keyword id="KW-0029">Amino-acid transport</keyword>
<keyword id="KW-0067">ATP-binding</keyword>
<keyword id="KW-1003">Cell membrane</keyword>
<keyword id="KW-0472">Membrane</keyword>
<keyword id="KW-0547">Nucleotide-binding</keyword>
<keyword id="KW-1278">Translocase</keyword>
<keyword id="KW-0813">Transport</keyword>
<comment type="function">
    <text evidence="1">Part of the ABC transporter complex MetNIQ involved in methionine import. Responsible for energy coupling to the transport system.</text>
</comment>
<comment type="catalytic activity">
    <reaction evidence="1">
        <text>L-methionine(out) + ATP + H2O = L-methionine(in) + ADP + phosphate + H(+)</text>
        <dbReference type="Rhea" id="RHEA:29779"/>
        <dbReference type="ChEBI" id="CHEBI:15377"/>
        <dbReference type="ChEBI" id="CHEBI:15378"/>
        <dbReference type="ChEBI" id="CHEBI:30616"/>
        <dbReference type="ChEBI" id="CHEBI:43474"/>
        <dbReference type="ChEBI" id="CHEBI:57844"/>
        <dbReference type="ChEBI" id="CHEBI:456216"/>
        <dbReference type="EC" id="7.4.2.11"/>
    </reaction>
</comment>
<comment type="catalytic activity">
    <reaction evidence="1">
        <text>D-methionine(out) + ATP + H2O = D-methionine(in) + ADP + phosphate + H(+)</text>
        <dbReference type="Rhea" id="RHEA:29767"/>
        <dbReference type="ChEBI" id="CHEBI:15377"/>
        <dbReference type="ChEBI" id="CHEBI:15378"/>
        <dbReference type="ChEBI" id="CHEBI:30616"/>
        <dbReference type="ChEBI" id="CHEBI:43474"/>
        <dbReference type="ChEBI" id="CHEBI:57932"/>
        <dbReference type="ChEBI" id="CHEBI:456216"/>
        <dbReference type="EC" id="7.4.2.11"/>
    </reaction>
</comment>
<comment type="subunit">
    <text evidence="1">The complex is composed of two ATP-binding proteins (MetN), two transmembrane proteins (MetI) and a solute-binding protein (MetQ).</text>
</comment>
<comment type="subcellular location">
    <subcellularLocation>
        <location evidence="1">Cell membrane</location>
        <topology evidence="1">Peripheral membrane protein</topology>
    </subcellularLocation>
</comment>
<comment type="similarity">
    <text evidence="1">Belongs to the ABC transporter superfamily. Methionine importer (TC 3.A.1.24) family.</text>
</comment>
<evidence type="ECO:0000255" key="1">
    <source>
        <dbReference type="HAMAP-Rule" id="MF_01719"/>
    </source>
</evidence>
<accession>Q2YVT7</accession>
<feature type="chain" id="PRO_0000270387" description="Methionine import ATP-binding protein MetN 1">
    <location>
        <begin position="1"/>
        <end position="341"/>
    </location>
</feature>
<feature type="domain" description="ABC transporter" evidence="1">
    <location>
        <begin position="2"/>
        <end position="241"/>
    </location>
</feature>
<feature type="binding site" evidence="1">
    <location>
        <begin position="38"/>
        <end position="45"/>
    </location>
    <ligand>
        <name>ATP</name>
        <dbReference type="ChEBI" id="CHEBI:30616"/>
    </ligand>
</feature>